<accession>A7IAF1</accession>
<evidence type="ECO:0000255" key="1">
    <source>
        <dbReference type="HAMAP-Rule" id="MF_02114"/>
    </source>
</evidence>
<sequence>MCPHALIPFKPAGPKSRLSGILSPEEREAFARAMLEDVIAAARDANCSPVIVATELFDSEDVQITIADKDLSGTLNEVLSQAAGPVLILMADLPLATGPAIKRVASTTSDIGIVPGRGGGTNAIFVREPAKFHVDYYGMSFLKHIRIAQEAGLSCEVIDSFLLHTDIDEEDDLVELLTHGSGKSRKYLEDLGFVLSAENGRVGVKRPVQPAPAT</sequence>
<organism>
    <name type="scientific">Methanoregula boonei (strain DSM 21154 / JCM 14090 / 6A8)</name>
    <dbReference type="NCBI Taxonomy" id="456442"/>
    <lineage>
        <taxon>Archaea</taxon>
        <taxon>Methanobacteriati</taxon>
        <taxon>Methanobacteriota</taxon>
        <taxon>Stenosarchaea group</taxon>
        <taxon>Methanomicrobia</taxon>
        <taxon>Methanomicrobiales</taxon>
        <taxon>Methanoregulaceae</taxon>
        <taxon>Methanoregula</taxon>
    </lineage>
</organism>
<feature type="chain" id="PRO_0000398753" description="2-phospho-L-lactate guanylyltransferase">
    <location>
        <begin position="1"/>
        <end position="214"/>
    </location>
</feature>
<comment type="function">
    <text evidence="1">Guanylyltransferase that catalyzes the activation of (2S)-2-phospholactate (2-PL) as (2S)-lactyl-2-diphospho-5'-guanosine, via the condensation of 2-PL with GTP. It is involved in the biosynthesis of coenzyme F420, a hydride carrier cofactor.</text>
</comment>
<comment type="catalytic activity">
    <reaction evidence="1">
        <text>(2S)-2-phospholactate + GTP + H(+) = (2S)-lactyl-2-diphospho-5'-guanosine + diphosphate</text>
        <dbReference type="Rhea" id="RHEA:63424"/>
        <dbReference type="ChEBI" id="CHEBI:15378"/>
        <dbReference type="ChEBI" id="CHEBI:33019"/>
        <dbReference type="ChEBI" id="CHEBI:37565"/>
        <dbReference type="ChEBI" id="CHEBI:59435"/>
        <dbReference type="ChEBI" id="CHEBI:59906"/>
        <dbReference type="EC" id="2.7.7.68"/>
    </reaction>
</comment>
<comment type="pathway">
    <text evidence="1">Cofactor biosynthesis; coenzyme F420 biosynthesis.</text>
</comment>
<comment type="subunit">
    <text evidence="1">Homodimer.</text>
</comment>
<comment type="similarity">
    <text evidence="1">Belongs to the CofC family.</text>
</comment>
<name>COFC_METB6</name>
<reference key="1">
    <citation type="journal article" date="2015" name="Microbiology">
        <title>Genome of Methanoregula boonei 6A8 reveals adaptations to oligotrophic peatland environments.</title>
        <authorList>
            <person name="Braeuer S."/>
            <person name="Cadillo-Quiroz H."/>
            <person name="Kyrpides N."/>
            <person name="Woyke T."/>
            <person name="Goodwin L."/>
            <person name="Detter C."/>
            <person name="Podell S."/>
            <person name="Yavitt J.B."/>
            <person name="Zinder S.H."/>
        </authorList>
    </citation>
    <scope>NUCLEOTIDE SEQUENCE [LARGE SCALE GENOMIC DNA]</scope>
    <source>
        <strain>DSM 21154 / JCM 14090 / 6A8</strain>
    </source>
</reference>
<keyword id="KW-0342">GTP-binding</keyword>
<keyword id="KW-0547">Nucleotide-binding</keyword>
<keyword id="KW-0548">Nucleotidyltransferase</keyword>
<keyword id="KW-1185">Reference proteome</keyword>
<keyword id="KW-0808">Transferase</keyword>
<proteinExistence type="inferred from homology"/>
<protein>
    <recommendedName>
        <fullName evidence="1">2-phospho-L-lactate guanylyltransferase</fullName>
        <shortName evidence="1">LP guanylyltransferase</shortName>
        <ecNumber evidence="1">2.7.7.68</ecNumber>
    </recommendedName>
</protein>
<dbReference type="EC" id="2.7.7.68" evidence="1"/>
<dbReference type="EMBL" id="CP000780">
    <property type="protein sequence ID" value="ABS56712.1"/>
    <property type="molecule type" value="Genomic_DNA"/>
</dbReference>
<dbReference type="RefSeq" id="WP_012107772.1">
    <property type="nucleotide sequence ID" value="NC_009712.1"/>
</dbReference>
<dbReference type="SMR" id="A7IAF1"/>
<dbReference type="STRING" id="456442.Mboo_2198"/>
<dbReference type="GeneID" id="5410984"/>
<dbReference type="KEGG" id="mbn:Mboo_2198"/>
<dbReference type="eggNOG" id="arCOG04472">
    <property type="taxonomic scope" value="Archaea"/>
</dbReference>
<dbReference type="HOGENOM" id="CLU_076569_2_0_2"/>
<dbReference type="OrthoDB" id="11179at2157"/>
<dbReference type="UniPathway" id="UPA00071"/>
<dbReference type="Proteomes" id="UP000002408">
    <property type="component" value="Chromosome"/>
</dbReference>
<dbReference type="GO" id="GO:0005525">
    <property type="term" value="F:GTP binding"/>
    <property type="evidence" value="ECO:0007669"/>
    <property type="project" value="UniProtKB-KW"/>
</dbReference>
<dbReference type="GO" id="GO:0043814">
    <property type="term" value="F:phospholactate guanylyltransferase activity"/>
    <property type="evidence" value="ECO:0007669"/>
    <property type="project" value="UniProtKB-EC"/>
</dbReference>
<dbReference type="GO" id="GO:0052645">
    <property type="term" value="P:F420-0 metabolic process"/>
    <property type="evidence" value="ECO:0007669"/>
    <property type="project" value="UniProtKB-UniRule"/>
</dbReference>
<dbReference type="Gene3D" id="6.10.140.50">
    <property type="match status" value="1"/>
</dbReference>
<dbReference type="Gene3D" id="3.90.550.10">
    <property type="entry name" value="Spore Coat Polysaccharide Biosynthesis Protein SpsA, Chain A"/>
    <property type="match status" value="1"/>
</dbReference>
<dbReference type="HAMAP" id="MF_02114">
    <property type="entry name" value="CofC"/>
    <property type="match status" value="1"/>
</dbReference>
<dbReference type="InterPro" id="IPR002835">
    <property type="entry name" value="CofC"/>
</dbReference>
<dbReference type="InterPro" id="IPR029044">
    <property type="entry name" value="Nucleotide-diphossugar_trans"/>
</dbReference>
<dbReference type="NCBIfam" id="TIGR03552">
    <property type="entry name" value="F420_cofC"/>
    <property type="match status" value="1"/>
</dbReference>
<dbReference type="PANTHER" id="PTHR40392">
    <property type="entry name" value="2-PHOSPHO-L-LACTATE GUANYLYLTRANSFERASE"/>
    <property type="match status" value="1"/>
</dbReference>
<dbReference type="PANTHER" id="PTHR40392:SF1">
    <property type="entry name" value="2-PHOSPHO-L-LACTATE GUANYLYLTRANSFERASE"/>
    <property type="match status" value="1"/>
</dbReference>
<dbReference type="Pfam" id="PF01983">
    <property type="entry name" value="CofC"/>
    <property type="match status" value="1"/>
</dbReference>
<dbReference type="SUPFAM" id="SSF53448">
    <property type="entry name" value="Nucleotide-diphospho-sugar transferases"/>
    <property type="match status" value="1"/>
</dbReference>
<gene>
    <name evidence="1" type="primary">cofC</name>
    <name type="ordered locus">Mboo_2198</name>
</gene>